<feature type="chain" id="PRO_0000326591" description="Transcription factor E">
    <location>
        <begin position="1"/>
        <end position="172"/>
    </location>
</feature>
<feature type="domain" description="HTH TFE/IIEalpha-type" evidence="1">
    <location>
        <begin position="8"/>
        <end position="90"/>
    </location>
</feature>
<protein>
    <recommendedName>
        <fullName evidence="1">Transcription factor E</fullName>
        <shortName evidence="1">TFE</shortName>
    </recommendedName>
    <alternativeName>
        <fullName evidence="1">TFIIE subunit alpha homolog</fullName>
    </alternativeName>
    <alternativeName>
        <fullName evidence="1">Transcription initiation factor TFIIE</fullName>
    </alternativeName>
</protein>
<organism>
    <name type="scientific">Halobacterium salinarum (strain ATCC 700922 / JCM 11081 / NRC-1)</name>
    <name type="common">Halobacterium halobium</name>
    <dbReference type="NCBI Taxonomy" id="64091"/>
    <lineage>
        <taxon>Archaea</taxon>
        <taxon>Methanobacteriati</taxon>
        <taxon>Methanobacteriota</taxon>
        <taxon>Stenosarchaea group</taxon>
        <taxon>Halobacteria</taxon>
        <taxon>Halobacteriales</taxon>
        <taxon>Halobacteriaceae</taxon>
        <taxon>Halobacterium</taxon>
        <taxon>Halobacterium salinarum NRC-34001</taxon>
    </lineage>
</organism>
<gene>
    <name evidence="1" type="primary">tfe</name>
    <name type="ordered locus">VNG_0757G</name>
</gene>
<reference key="1">
    <citation type="journal article" date="2000" name="Proc. Natl. Acad. Sci. U.S.A.">
        <title>Genome sequence of Halobacterium species NRC-1.</title>
        <authorList>
            <person name="Ng W.V."/>
            <person name="Kennedy S.P."/>
            <person name="Mahairas G.G."/>
            <person name="Berquist B."/>
            <person name="Pan M."/>
            <person name="Shukla H.D."/>
            <person name="Lasky S.R."/>
            <person name="Baliga N.S."/>
            <person name="Thorsson V."/>
            <person name="Sbrogna J."/>
            <person name="Swartzell S."/>
            <person name="Weir D."/>
            <person name="Hall J."/>
            <person name="Dahl T.A."/>
            <person name="Welti R."/>
            <person name="Goo Y.A."/>
            <person name="Leithauser B."/>
            <person name="Keller K."/>
            <person name="Cruz R."/>
            <person name="Danson M.J."/>
            <person name="Hough D.W."/>
            <person name="Maddocks D.G."/>
            <person name="Jablonski P.E."/>
            <person name="Krebs M.P."/>
            <person name="Angevine C.M."/>
            <person name="Dale H."/>
            <person name="Isenbarger T.A."/>
            <person name="Peck R.F."/>
            <person name="Pohlschroder M."/>
            <person name="Spudich J.L."/>
            <person name="Jung K.-H."/>
            <person name="Alam M."/>
            <person name="Freitas T."/>
            <person name="Hou S."/>
            <person name="Daniels C.J."/>
            <person name="Dennis P.P."/>
            <person name="Omer A.D."/>
            <person name="Ebhardt H."/>
            <person name="Lowe T.M."/>
            <person name="Liang P."/>
            <person name="Riley M."/>
            <person name="Hood L."/>
            <person name="DasSarma S."/>
        </authorList>
    </citation>
    <scope>NUCLEOTIDE SEQUENCE [LARGE SCALE GENOMIC DNA]</scope>
    <source>
        <strain>ATCC 700922 / JCM 11081 / NRC-1</strain>
    </source>
</reference>
<proteinExistence type="inferred from homology"/>
<evidence type="ECO:0000255" key="1">
    <source>
        <dbReference type="HAMAP-Rule" id="MF_01909"/>
    </source>
</evidence>
<evidence type="ECO:0000305" key="2"/>
<name>TFE_HALSA</name>
<keyword id="KW-0238">DNA-binding</keyword>
<keyword id="KW-1185">Reference proteome</keyword>
<keyword id="KW-0804">Transcription</keyword>
<keyword id="KW-0805">Transcription regulation</keyword>
<comment type="function">
    <text evidence="1">Transcription factor that plays a role in the activation of archaeal genes transcribed by RNA polymerase. Facilitates transcription initiation by enhancing TATA-box recognition by TATA-box-binding protein (Tbp), and transcription factor B (Tfb) and RNA polymerase recruitment. Not absolutely required for transcription in vitro, but particularly important in cases where Tbp or Tfb function is not optimal. It dynamically alters the nucleic acid-binding properties of RNA polymerases by stabilizing the initiation complex and destabilizing elongation complexes. Seems to translocate with the RNA polymerase following initiation and acts by binding to the non template strand of the transcription bubble in elongation complexes.</text>
</comment>
<comment type="subunit">
    <text evidence="1">Monomer. Interaction with RNA polymerase subunits RpoF and RpoE is necessary for Tfe stimulatory transcription activity. Able to interact with Tbp and RNA polymerase in the absence of DNA promoter. Interacts both with the preinitiation and elongation complexes.</text>
</comment>
<comment type="domain">
    <text evidence="1">The winged helix domain is involved in binding to DNA in the preinitiation complex.</text>
</comment>
<comment type="similarity">
    <text evidence="1">Belongs to the TFE family.</text>
</comment>
<comment type="sequence caution" evidence="2">
    <conflict type="erroneous initiation">
        <sequence resource="EMBL-CDS" id="AAG19231"/>
    </conflict>
</comment>
<accession>Q9HRC7</accession>
<dbReference type="EMBL" id="AE004437">
    <property type="protein sequence ID" value="AAG19231.1"/>
    <property type="status" value="ALT_INIT"/>
    <property type="molecule type" value="Genomic_DNA"/>
</dbReference>
<dbReference type="PIR" id="C84233">
    <property type="entry name" value="C84233"/>
</dbReference>
<dbReference type="RefSeq" id="WP_012289219.1">
    <property type="nucleotide sequence ID" value="NC_002607.1"/>
</dbReference>
<dbReference type="SMR" id="Q9HRC7"/>
<dbReference type="FunCoup" id="Q9HRC7">
    <property type="interactions" value="13"/>
</dbReference>
<dbReference type="STRING" id="64091.VNG_0757G"/>
<dbReference type="PaxDb" id="64091-VNG_0757G"/>
<dbReference type="KEGG" id="hal:VNG_0757G"/>
<dbReference type="PATRIC" id="fig|64091.14.peg.581"/>
<dbReference type="HOGENOM" id="CLU_100097_0_0_2"/>
<dbReference type="InParanoid" id="Q9HRC7"/>
<dbReference type="OrthoDB" id="5935at2157"/>
<dbReference type="PhylomeDB" id="Q9HRC7"/>
<dbReference type="Proteomes" id="UP000000554">
    <property type="component" value="Chromosome"/>
</dbReference>
<dbReference type="GO" id="GO:0003677">
    <property type="term" value="F:DNA binding"/>
    <property type="evidence" value="ECO:0007669"/>
    <property type="project" value="UniProtKB-KW"/>
</dbReference>
<dbReference type="GO" id="GO:0006355">
    <property type="term" value="P:regulation of DNA-templated transcription"/>
    <property type="evidence" value="ECO:0007669"/>
    <property type="project" value="InterPro"/>
</dbReference>
<dbReference type="GO" id="GO:0006367">
    <property type="term" value="P:transcription initiation at RNA polymerase II promoter"/>
    <property type="evidence" value="ECO:0007669"/>
    <property type="project" value="InterPro"/>
</dbReference>
<dbReference type="FunFam" id="1.10.10.10:FF:000264">
    <property type="entry name" value="Transcription factor E"/>
    <property type="match status" value="1"/>
</dbReference>
<dbReference type="Gene3D" id="1.10.10.10">
    <property type="entry name" value="Winged helix-like DNA-binding domain superfamily/Winged helix DNA-binding domain"/>
    <property type="match status" value="1"/>
</dbReference>
<dbReference type="HAMAP" id="MF_01909">
    <property type="entry name" value="TFE_arch"/>
    <property type="match status" value="1"/>
</dbReference>
<dbReference type="InterPro" id="IPR016481">
    <property type="entry name" value="TF_E_archaea"/>
</dbReference>
<dbReference type="InterPro" id="IPR039997">
    <property type="entry name" value="TFE"/>
</dbReference>
<dbReference type="InterPro" id="IPR017919">
    <property type="entry name" value="TFIIE/TFIIEa_HTH"/>
</dbReference>
<dbReference type="InterPro" id="IPR002853">
    <property type="entry name" value="TFIIE_asu"/>
</dbReference>
<dbReference type="InterPro" id="IPR024550">
    <property type="entry name" value="TFIIEa/SarR/Rpc3_HTH_dom"/>
</dbReference>
<dbReference type="InterPro" id="IPR036388">
    <property type="entry name" value="WH-like_DNA-bd_sf"/>
</dbReference>
<dbReference type="InterPro" id="IPR036390">
    <property type="entry name" value="WH_DNA-bd_sf"/>
</dbReference>
<dbReference type="PANTHER" id="PTHR13097:SF7">
    <property type="entry name" value="GENERAL TRANSCRIPTION FACTOR IIE SUBUNIT 1"/>
    <property type="match status" value="1"/>
</dbReference>
<dbReference type="PANTHER" id="PTHR13097">
    <property type="entry name" value="TRANSCRIPTION INITIATION FACTOR IIE, ALPHA SUBUNIT"/>
    <property type="match status" value="1"/>
</dbReference>
<dbReference type="Pfam" id="PF02002">
    <property type="entry name" value="TFIIE_alpha"/>
    <property type="match status" value="1"/>
</dbReference>
<dbReference type="PIRSF" id="PIRSF006373">
    <property type="entry name" value="TF_E_archaea"/>
    <property type="match status" value="1"/>
</dbReference>
<dbReference type="SMART" id="SM00531">
    <property type="entry name" value="TFIIE"/>
    <property type="match status" value="1"/>
</dbReference>
<dbReference type="SUPFAM" id="SSF46785">
    <property type="entry name" value="Winged helix' DNA-binding domain"/>
    <property type="match status" value="1"/>
</dbReference>
<dbReference type="PROSITE" id="PS51344">
    <property type="entry name" value="HTH_TFE_IIE"/>
    <property type="match status" value="1"/>
</dbReference>
<sequence length="172" mass="19884">MAFEDLLDDPVVQKYLHELVGPKGMPVAAAPPDGEVTDEELAERLGLELNDVRRALFILYENDLATYRRVRDEDSGWLTYLWTFQYENVPGNLREEMDRLLEALVDRREYELENEFYLCEVCSIRFEFGEAMDLGFECPECGSAVEAMENTDLVDAMDDRIERLRSELAVEA</sequence>